<reference key="1">
    <citation type="submission" date="2007-06" db="EMBL/GenBank/DDBJ databases">
        <title>Complete sequence of chromosome of Staphylococcus aureus subsp. aureus JH1.</title>
        <authorList>
            <consortium name="US DOE Joint Genome Institute"/>
            <person name="Copeland A."/>
            <person name="Lucas S."/>
            <person name="Lapidus A."/>
            <person name="Barry K."/>
            <person name="Detter J.C."/>
            <person name="Glavina del Rio T."/>
            <person name="Hammon N."/>
            <person name="Israni S."/>
            <person name="Dalin E."/>
            <person name="Tice H."/>
            <person name="Pitluck S."/>
            <person name="Chain P."/>
            <person name="Malfatti S."/>
            <person name="Shin M."/>
            <person name="Vergez L."/>
            <person name="Schmutz J."/>
            <person name="Larimer F."/>
            <person name="Land M."/>
            <person name="Hauser L."/>
            <person name="Kyrpides N."/>
            <person name="Ivanova N."/>
            <person name="Tomasz A."/>
            <person name="Richardson P."/>
        </authorList>
    </citation>
    <scope>NUCLEOTIDE SEQUENCE [LARGE SCALE GENOMIC DNA]</scope>
    <source>
        <strain>JH1</strain>
    </source>
</reference>
<keyword id="KW-0963">Cytoplasm</keyword>
<keyword id="KW-0227">DNA damage</keyword>
<keyword id="KW-0234">DNA repair</keyword>
<keyword id="KW-0378">Hydrolase</keyword>
<keyword id="KW-0346">Stress response</keyword>
<sequence length="292" mass="32177">MSQDVNELSKQPTPDKAEDNAFFPSPYSLSQYTAPKTDFDGVEHKGAYKDGKWKVLMIAAEERYVLLENGKMFSTGNHPVEMLLPLHHLMEAGFDVDVATLSGYPVKLELWAMPTEDEAVISTYNKLKEKLKQPKKLADVIKNELGPDSDYLSVFIPGGHAAVVGISESEDVQQTLDWALDNDRFIVTLCHGPAALLSAGLNREKSPLEGYSVCVFPDSLDEGANIEIGYLPGRLKWLVADLLTKQGLKVVNDDMTGRTLKDRKLLTGDSPLASNELGKLAVNEMLNAIQNK</sequence>
<feature type="chain" id="PRO_1000084410" description="Protein/nucleic acid deglycase HchA">
    <location>
        <begin position="1"/>
        <end position="292"/>
    </location>
</feature>
<feature type="region of interest" description="Disordered" evidence="2">
    <location>
        <begin position="1"/>
        <end position="23"/>
    </location>
</feature>
<feature type="compositionally biased region" description="Polar residues" evidence="2">
    <location>
        <begin position="1"/>
        <end position="12"/>
    </location>
</feature>
<feature type="active site" description="Nucleophile" evidence="1">
    <location>
        <position position="190"/>
    </location>
</feature>
<gene>
    <name evidence="1" type="primary">hchA</name>
    <name type="ordered locus">SaurJH1_0588</name>
</gene>
<proteinExistence type="inferred from homology"/>
<organism>
    <name type="scientific">Staphylococcus aureus (strain JH1)</name>
    <dbReference type="NCBI Taxonomy" id="359787"/>
    <lineage>
        <taxon>Bacteria</taxon>
        <taxon>Bacillati</taxon>
        <taxon>Bacillota</taxon>
        <taxon>Bacilli</taxon>
        <taxon>Bacillales</taxon>
        <taxon>Staphylococcaceae</taxon>
        <taxon>Staphylococcus</taxon>
    </lineage>
</organism>
<name>HCHA_STAA2</name>
<accession>A6TZ28</accession>
<evidence type="ECO:0000255" key="1">
    <source>
        <dbReference type="HAMAP-Rule" id="MF_01046"/>
    </source>
</evidence>
<evidence type="ECO:0000256" key="2">
    <source>
        <dbReference type="SAM" id="MobiDB-lite"/>
    </source>
</evidence>
<dbReference type="EC" id="3.1.2.-" evidence="1"/>
<dbReference type="EC" id="3.5.1.-" evidence="1"/>
<dbReference type="EC" id="3.5.1.124" evidence="1"/>
<dbReference type="EMBL" id="CP000736">
    <property type="protein sequence ID" value="ABR51446.1"/>
    <property type="molecule type" value="Genomic_DNA"/>
</dbReference>
<dbReference type="SMR" id="A6TZ28"/>
<dbReference type="KEGG" id="sah:SaurJH1_0588"/>
<dbReference type="HOGENOM" id="CLU_066933_0_0_9"/>
<dbReference type="GO" id="GO:0005737">
    <property type="term" value="C:cytoplasm"/>
    <property type="evidence" value="ECO:0007669"/>
    <property type="project" value="UniProtKB-SubCell"/>
</dbReference>
<dbReference type="GO" id="GO:0019172">
    <property type="term" value="F:glyoxalase III activity"/>
    <property type="evidence" value="ECO:0007669"/>
    <property type="project" value="TreeGrafter"/>
</dbReference>
<dbReference type="GO" id="GO:0036524">
    <property type="term" value="F:protein deglycase activity"/>
    <property type="evidence" value="ECO:0007669"/>
    <property type="project" value="UniProtKB-UniRule"/>
</dbReference>
<dbReference type="GO" id="GO:0016790">
    <property type="term" value="F:thiolester hydrolase activity"/>
    <property type="evidence" value="ECO:0007669"/>
    <property type="project" value="UniProtKB-UniRule"/>
</dbReference>
<dbReference type="GO" id="GO:0006281">
    <property type="term" value="P:DNA repair"/>
    <property type="evidence" value="ECO:0007669"/>
    <property type="project" value="UniProtKB-UniRule"/>
</dbReference>
<dbReference type="GO" id="GO:0019243">
    <property type="term" value="P:methylglyoxal catabolic process to D-lactate via S-lactoyl-glutathione"/>
    <property type="evidence" value="ECO:0007669"/>
    <property type="project" value="TreeGrafter"/>
</dbReference>
<dbReference type="GO" id="GO:0030091">
    <property type="term" value="P:protein repair"/>
    <property type="evidence" value="ECO:0007669"/>
    <property type="project" value="UniProtKB-UniRule"/>
</dbReference>
<dbReference type="CDD" id="cd03148">
    <property type="entry name" value="GATase1_EcHsp31_like"/>
    <property type="match status" value="1"/>
</dbReference>
<dbReference type="Gene3D" id="3.40.50.880">
    <property type="match status" value="1"/>
</dbReference>
<dbReference type="HAMAP" id="MF_01046">
    <property type="entry name" value="Deglycase_HchA"/>
    <property type="match status" value="1"/>
</dbReference>
<dbReference type="InterPro" id="IPR029062">
    <property type="entry name" value="Class_I_gatase-like"/>
</dbReference>
<dbReference type="InterPro" id="IPR002818">
    <property type="entry name" value="DJ-1/PfpI"/>
</dbReference>
<dbReference type="InterPro" id="IPR017283">
    <property type="entry name" value="HchA"/>
</dbReference>
<dbReference type="InterPro" id="IPR050325">
    <property type="entry name" value="Prot/Nucl_acid_deglycase"/>
</dbReference>
<dbReference type="NCBIfam" id="NF003168">
    <property type="entry name" value="PRK04155.1"/>
    <property type="match status" value="1"/>
</dbReference>
<dbReference type="PANTHER" id="PTHR48094">
    <property type="entry name" value="PROTEIN/NUCLEIC ACID DEGLYCASE DJ-1-RELATED"/>
    <property type="match status" value="1"/>
</dbReference>
<dbReference type="PANTHER" id="PTHR48094:SF20">
    <property type="entry name" value="PROTEIN_NUCLEIC ACID DEGLYCASE 1"/>
    <property type="match status" value="1"/>
</dbReference>
<dbReference type="Pfam" id="PF01965">
    <property type="entry name" value="DJ-1_PfpI"/>
    <property type="match status" value="1"/>
</dbReference>
<dbReference type="PIRSF" id="PIRSF037798">
    <property type="entry name" value="Chaperone_HchA"/>
    <property type="match status" value="1"/>
</dbReference>
<dbReference type="SUPFAM" id="SSF52317">
    <property type="entry name" value="Class I glutamine amidotransferase-like"/>
    <property type="match status" value="1"/>
</dbReference>
<comment type="function">
    <text evidence="1">Protein and nucleotide deglycase that catalyzes the deglycation of the Maillard adducts formed between amino groups of proteins or nucleotides and reactive carbonyl groups of glyoxals. Thus, functions as a protein deglycase that repairs methylglyoxal- and glyoxal-glycated proteins, and releases repaired proteins and lactate or glycolate, respectively. Deglycates cysteine, arginine and lysine residues in proteins, and thus reactivates these proteins by reversing glycation by glyoxals. Acts on early glycation intermediates (hemithioacetals and aminocarbinols), preventing the formation of Schiff bases and advanced glycation endproducts (AGE). Also functions as a nucleotide deglycase able to repair glycated guanine in the free nucleotide pool (GTP, GDP, GMP, dGTP) and in DNA and RNA. Is thus involved in a major nucleotide repair system named guanine glycation repair (GG repair), dedicated to reversing methylglyoxal and glyoxal damage via nucleotide sanitization and direct nucleic acid repair. Plays an important role in protecting cells from carbonyl stress.</text>
</comment>
<comment type="catalytic activity">
    <reaction evidence="1">
        <text>N(omega)-(1-hydroxy-2-oxopropyl)-L-arginyl-[protein] + H2O = lactate + L-arginyl-[protein] + H(+)</text>
        <dbReference type="Rhea" id="RHEA:49548"/>
        <dbReference type="Rhea" id="RHEA-COMP:10532"/>
        <dbReference type="Rhea" id="RHEA-COMP:12428"/>
        <dbReference type="ChEBI" id="CHEBI:15377"/>
        <dbReference type="ChEBI" id="CHEBI:15378"/>
        <dbReference type="ChEBI" id="CHEBI:24996"/>
        <dbReference type="ChEBI" id="CHEBI:29965"/>
        <dbReference type="ChEBI" id="CHEBI:131708"/>
        <dbReference type="EC" id="3.5.1.124"/>
    </reaction>
</comment>
<comment type="catalytic activity">
    <reaction evidence="1">
        <text>N(6)-(1-hydroxy-2-oxopropyl)-L-lysyl-[protein] + H2O = lactate + L-lysyl-[protein] + H(+)</text>
        <dbReference type="Rhea" id="RHEA:49552"/>
        <dbReference type="Rhea" id="RHEA-COMP:9752"/>
        <dbReference type="Rhea" id="RHEA-COMP:12429"/>
        <dbReference type="ChEBI" id="CHEBI:15377"/>
        <dbReference type="ChEBI" id="CHEBI:15378"/>
        <dbReference type="ChEBI" id="CHEBI:24996"/>
        <dbReference type="ChEBI" id="CHEBI:29969"/>
        <dbReference type="ChEBI" id="CHEBI:131709"/>
        <dbReference type="EC" id="3.5.1.124"/>
    </reaction>
</comment>
<comment type="catalytic activity">
    <reaction evidence="1">
        <text>S-(1-hydroxy-2-oxopropyl)-L-cysteinyl-[protein] + H2O = lactate + L-cysteinyl-[protein] + H(+)</text>
        <dbReference type="Rhea" id="RHEA:49556"/>
        <dbReference type="Rhea" id="RHEA-COMP:10131"/>
        <dbReference type="Rhea" id="RHEA-COMP:12430"/>
        <dbReference type="ChEBI" id="CHEBI:15377"/>
        <dbReference type="ChEBI" id="CHEBI:15378"/>
        <dbReference type="ChEBI" id="CHEBI:24996"/>
        <dbReference type="ChEBI" id="CHEBI:29950"/>
        <dbReference type="ChEBI" id="CHEBI:131710"/>
        <dbReference type="EC" id="3.5.1.124"/>
    </reaction>
</comment>
<comment type="catalytic activity">
    <reaction evidence="1">
        <text>N(omega)-(1-hydroxy-2-oxoethyl)-L-arginyl-[protein] + H2O = L-arginyl-[protein] + glycolate + H(+)</text>
        <dbReference type="Rhea" id="RHEA:57188"/>
        <dbReference type="Rhea" id="RHEA-COMP:10532"/>
        <dbReference type="Rhea" id="RHEA-COMP:14844"/>
        <dbReference type="ChEBI" id="CHEBI:15377"/>
        <dbReference type="ChEBI" id="CHEBI:15378"/>
        <dbReference type="ChEBI" id="CHEBI:29805"/>
        <dbReference type="ChEBI" id="CHEBI:29965"/>
        <dbReference type="ChEBI" id="CHEBI:141553"/>
        <dbReference type="EC" id="3.5.1.124"/>
    </reaction>
</comment>
<comment type="catalytic activity">
    <reaction evidence="1">
        <text>N(6)-(1-hydroxy-2-oxoethyl)-L-lysyl-[protein] + H2O = glycolate + L-lysyl-[protein] + H(+)</text>
        <dbReference type="Rhea" id="RHEA:57192"/>
        <dbReference type="Rhea" id="RHEA-COMP:9752"/>
        <dbReference type="Rhea" id="RHEA-COMP:14845"/>
        <dbReference type="ChEBI" id="CHEBI:15377"/>
        <dbReference type="ChEBI" id="CHEBI:15378"/>
        <dbReference type="ChEBI" id="CHEBI:29805"/>
        <dbReference type="ChEBI" id="CHEBI:29969"/>
        <dbReference type="ChEBI" id="CHEBI:141554"/>
        <dbReference type="EC" id="3.5.1.124"/>
    </reaction>
</comment>
<comment type="catalytic activity">
    <reaction evidence="1">
        <text>S-(1-hydroxy-2-oxoethyl)-L-cysteinyl-[protein] + H2O = glycolate + L-cysteinyl-[protein] + H(+)</text>
        <dbReference type="Rhea" id="RHEA:57196"/>
        <dbReference type="Rhea" id="RHEA-COMP:10131"/>
        <dbReference type="Rhea" id="RHEA-COMP:14846"/>
        <dbReference type="ChEBI" id="CHEBI:15377"/>
        <dbReference type="ChEBI" id="CHEBI:15378"/>
        <dbReference type="ChEBI" id="CHEBI:29805"/>
        <dbReference type="ChEBI" id="CHEBI:29950"/>
        <dbReference type="ChEBI" id="CHEBI:141555"/>
        <dbReference type="EC" id="3.5.1.124"/>
    </reaction>
</comment>
<comment type="catalytic activity">
    <reaction evidence="1">
        <text>N(2)-(1-hydroxy-2-oxopropyl)-dGTP + H2O = lactate + dGTP + H(+)</text>
        <dbReference type="Rhea" id="RHEA:57244"/>
        <dbReference type="ChEBI" id="CHEBI:15377"/>
        <dbReference type="ChEBI" id="CHEBI:15378"/>
        <dbReference type="ChEBI" id="CHEBI:24996"/>
        <dbReference type="ChEBI" id="CHEBI:61429"/>
        <dbReference type="ChEBI" id="CHEBI:141569"/>
    </reaction>
</comment>
<comment type="catalytic activity">
    <reaction evidence="1">
        <text>N(2)-(1-hydroxy-2-oxopropyl)-GTP + H2O = lactate + GTP + H(+)</text>
        <dbReference type="Rhea" id="RHEA:57256"/>
        <dbReference type="ChEBI" id="CHEBI:15377"/>
        <dbReference type="ChEBI" id="CHEBI:15378"/>
        <dbReference type="ChEBI" id="CHEBI:24996"/>
        <dbReference type="ChEBI" id="CHEBI:37565"/>
        <dbReference type="ChEBI" id="CHEBI:141570"/>
    </reaction>
</comment>
<comment type="catalytic activity">
    <reaction evidence="1">
        <text>N(2)-(1-hydroxy-2-oxopropyl)-GDP + H2O = lactate + GDP + H(+)</text>
        <dbReference type="Rhea" id="RHEA:57260"/>
        <dbReference type="ChEBI" id="CHEBI:15377"/>
        <dbReference type="ChEBI" id="CHEBI:15378"/>
        <dbReference type="ChEBI" id="CHEBI:24996"/>
        <dbReference type="ChEBI" id="CHEBI:58189"/>
        <dbReference type="ChEBI" id="CHEBI:141573"/>
    </reaction>
</comment>
<comment type="catalytic activity">
    <reaction evidence="1">
        <text>N(2)-(1-hydroxy-2-oxopropyl)-GMP + H2O = lactate + GMP + H(+)</text>
        <dbReference type="Rhea" id="RHEA:57268"/>
        <dbReference type="ChEBI" id="CHEBI:15377"/>
        <dbReference type="ChEBI" id="CHEBI:15378"/>
        <dbReference type="ChEBI" id="CHEBI:24996"/>
        <dbReference type="ChEBI" id="CHEBI:58115"/>
        <dbReference type="ChEBI" id="CHEBI:141575"/>
    </reaction>
</comment>
<comment type="catalytic activity">
    <reaction evidence="1">
        <text>N(2)-(1-hydroxy-2-oxoethyl)-dGTP + H2O = dGTP + glycolate + H(+)</text>
        <dbReference type="Rhea" id="RHEA:57248"/>
        <dbReference type="ChEBI" id="CHEBI:15377"/>
        <dbReference type="ChEBI" id="CHEBI:15378"/>
        <dbReference type="ChEBI" id="CHEBI:29805"/>
        <dbReference type="ChEBI" id="CHEBI:61429"/>
        <dbReference type="ChEBI" id="CHEBI:141572"/>
    </reaction>
</comment>
<comment type="catalytic activity">
    <reaction evidence="1">
        <text>N(2)-(1-hydroxy-2-oxoethyl)-GTP + H2O = glycolate + GTP + H(+)</text>
        <dbReference type="Rhea" id="RHEA:57252"/>
        <dbReference type="ChEBI" id="CHEBI:15377"/>
        <dbReference type="ChEBI" id="CHEBI:15378"/>
        <dbReference type="ChEBI" id="CHEBI:29805"/>
        <dbReference type="ChEBI" id="CHEBI:37565"/>
        <dbReference type="ChEBI" id="CHEBI:141571"/>
    </reaction>
</comment>
<comment type="catalytic activity">
    <reaction evidence="1">
        <text>N(2)-(1-hydroxy-2-oxoethyl)-GDP + H2O = glycolate + GDP + H(+)</text>
        <dbReference type="Rhea" id="RHEA:57264"/>
        <dbReference type="ChEBI" id="CHEBI:15377"/>
        <dbReference type="ChEBI" id="CHEBI:15378"/>
        <dbReference type="ChEBI" id="CHEBI:29805"/>
        <dbReference type="ChEBI" id="CHEBI:58189"/>
        <dbReference type="ChEBI" id="CHEBI:141574"/>
    </reaction>
</comment>
<comment type="catalytic activity">
    <reaction evidence="1">
        <text>N(2)-(1-hydroxy-2-oxoethyl)-GMP + H2O = glycolate + GMP + H(+)</text>
        <dbReference type="Rhea" id="RHEA:57304"/>
        <dbReference type="ChEBI" id="CHEBI:15377"/>
        <dbReference type="ChEBI" id="CHEBI:15378"/>
        <dbReference type="ChEBI" id="CHEBI:29805"/>
        <dbReference type="ChEBI" id="CHEBI:58115"/>
        <dbReference type="ChEBI" id="CHEBI:141576"/>
    </reaction>
</comment>
<comment type="catalytic activity">
    <reaction evidence="1">
        <text>an N(2)-(1-hydroxy-2-oxopropyl)-guanosine in RNA + H2O = a guanosine in RNA + lactate + H(+)</text>
        <dbReference type="Rhea" id="RHEA:57288"/>
        <dbReference type="Rhea" id="RHEA-COMP:14855"/>
        <dbReference type="Rhea" id="RHEA-COMP:14858"/>
        <dbReference type="ChEBI" id="CHEBI:15377"/>
        <dbReference type="ChEBI" id="CHEBI:15378"/>
        <dbReference type="ChEBI" id="CHEBI:24996"/>
        <dbReference type="ChEBI" id="CHEBI:74269"/>
        <dbReference type="ChEBI" id="CHEBI:141580"/>
    </reaction>
</comment>
<comment type="catalytic activity">
    <reaction evidence="1">
        <text>an N(2)-(1-hydroxy-2-oxopropyl)-2'-deoxyguanosine in DNA + H2O = a 2'-deoxyguanosine in DNA + lactate + H(+)</text>
        <dbReference type="Rhea" id="RHEA:57300"/>
        <dbReference type="Rhea" id="RHEA-COMP:11367"/>
        <dbReference type="Rhea" id="RHEA-COMP:14856"/>
        <dbReference type="ChEBI" id="CHEBI:15377"/>
        <dbReference type="ChEBI" id="CHEBI:15378"/>
        <dbReference type="ChEBI" id="CHEBI:24996"/>
        <dbReference type="ChEBI" id="CHEBI:85445"/>
        <dbReference type="ChEBI" id="CHEBI:141578"/>
    </reaction>
</comment>
<comment type="catalytic activity">
    <reaction evidence="1">
        <text>an N(2)-(1-hydroxy-2-oxoethyl)-guanosine in RNA + H2O = a guanosine in RNA + glycolate + H(+)</text>
        <dbReference type="Rhea" id="RHEA:57292"/>
        <dbReference type="Rhea" id="RHEA-COMP:14855"/>
        <dbReference type="Rhea" id="RHEA-COMP:14859"/>
        <dbReference type="ChEBI" id="CHEBI:15377"/>
        <dbReference type="ChEBI" id="CHEBI:15378"/>
        <dbReference type="ChEBI" id="CHEBI:29805"/>
        <dbReference type="ChEBI" id="CHEBI:74269"/>
        <dbReference type="ChEBI" id="CHEBI:141581"/>
    </reaction>
</comment>
<comment type="catalytic activity">
    <reaction evidence="1">
        <text>an N(2)-(1-hydroxy-2-oxoethyl)-2'-deoxyguanosine in DNA + H2O = a 2'-deoxyguanosine in DNA + glycolate + H(+)</text>
        <dbReference type="Rhea" id="RHEA:57296"/>
        <dbReference type="Rhea" id="RHEA-COMP:11367"/>
        <dbReference type="Rhea" id="RHEA-COMP:14857"/>
        <dbReference type="ChEBI" id="CHEBI:15377"/>
        <dbReference type="ChEBI" id="CHEBI:15378"/>
        <dbReference type="ChEBI" id="CHEBI:29805"/>
        <dbReference type="ChEBI" id="CHEBI:85445"/>
        <dbReference type="ChEBI" id="CHEBI:141579"/>
    </reaction>
</comment>
<comment type="subcellular location">
    <subcellularLocation>
        <location evidence="1">Cytoplasm</location>
    </subcellularLocation>
</comment>
<comment type="similarity">
    <text evidence="1">Belongs to the peptidase C56 family. HchA subfamily.</text>
</comment>
<protein>
    <recommendedName>
        <fullName evidence="1">Protein/nucleic acid deglycase HchA</fullName>
        <ecNumber evidence="1">3.1.2.-</ecNumber>
        <ecNumber evidence="1">3.5.1.-</ecNumber>
        <ecNumber evidence="1">3.5.1.124</ecNumber>
    </recommendedName>
    <alternativeName>
        <fullName evidence="1">Maillard deglycase</fullName>
    </alternativeName>
</protein>